<organism>
    <name type="scientific">Bos taurus</name>
    <name type="common">Bovine</name>
    <dbReference type="NCBI Taxonomy" id="9913"/>
    <lineage>
        <taxon>Eukaryota</taxon>
        <taxon>Metazoa</taxon>
        <taxon>Chordata</taxon>
        <taxon>Craniata</taxon>
        <taxon>Vertebrata</taxon>
        <taxon>Euteleostomi</taxon>
        <taxon>Mammalia</taxon>
        <taxon>Eutheria</taxon>
        <taxon>Laurasiatheria</taxon>
        <taxon>Artiodactyla</taxon>
        <taxon>Ruminantia</taxon>
        <taxon>Pecora</taxon>
        <taxon>Bovidae</taxon>
        <taxon>Bovinae</taxon>
        <taxon>Bos</taxon>
    </lineage>
</organism>
<feature type="chain" id="PRO_0000259576" description="Mitochondrial inner membrane protease subunit 2">
    <location>
        <begin position="1"/>
        <end position="177"/>
    </location>
</feature>
<feature type="transmembrane region" description="Helical" evidence="2">
    <location>
        <begin position="19"/>
        <end position="37"/>
    </location>
</feature>
<feature type="active site" evidence="1">
    <location>
        <position position="43"/>
    </location>
</feature>
<feature type="active site" evidence="1">
    <location>
        <position position="91"/>
    </location>
</feature>
<name>IMP2L_BOVIN</name>
<reference key="1">
    <citation type="submission" date="2006-01" db="EMBL/GenBank/DDBJ databases">
        <authorList>
            <consortium name="NIH - Mammalian Gene Collection (MGC) project"/>
        </authorList>
    </citation>
    <scope>NUCLEOTIDE SEQUENCE [LARGE SCALE MRNA]</scope>
    <source>
        <strain>Hereford</strain>
        <tissue>Heart ventricle</tissue>
    </source>
</reference>
<dbReference type="EC" id="3.4.21.-"/>
<dbReference type="EMBL" id="BC112723">
    <property type="protein sequence ID" value="AAI12724.1"/>
    <property type="molecule type" value="mRNA"/>
</dbReference>
<dbReference type="RefSeq" id="XP_024846827.1">
    <property type="nucleotide sequence ID" value="XM_024991059.2"/>
</dbReference>
<dbReference type="RefSeq" id="XP_024846831.1">
    <property type="nucleotide sequence ID" value="XM_024991063.2"/>
</dbReference>
<dbReference type="SMR" id="Q2KI92"/>
<dbReference type="FunCoup" id="Q2KI92">
    <property type="interactions" value="701"/>
</dbReference>
<dbReference type="STRING" id="9913.ENSBTAP00000005770"/>
<dbReference type="PaxDb" id="9913-ENSBTAP00000005770"/>
<dbReference type="Ensembl" id="ENSBTAT00000118997.1">
    <property type="protein sequence ID" value="ENSBTAP00000099916.1"/>
    <property type="gene ID" value="ENSBTAG00000004398.6"/>
</dbReference>
<dbReference type="GeneID" id="101902373"/>
<dbReference type="VEuPathDB" id="HostDB:ENSBTAG00000004398"/>
<dbReference type="VGNC" id="VGNC:57350">
    <property type="gene designation" value="IMMP2L"/>
</dbReference>
<dbReference type="eggNOG" id="KOG1568">
    <property type="taxonomic scope" value="Eukaryota"/>
</dbReference>
<dbReference type="GeneTree" id="ENSGT00550000075044"/>
<dbReference type="HOGENOM" id="CLU_028723_4_1_1"/>
<dbReference type="InParanoid" id="Q2KI92"/>
<dbReference type="OMA" id="WIPVIAW"/>
<dbReference type="OrthoDB" id="9996127at2759"/>
<dbReference type="TreeFam" id="TF315065"/>
<dbReference type="Proteomes" id="UP000009136">
    <property type="component" value="Chromosome 4"/>
</dbReference>
<dbReference type="Bgee" id="ENSBTAG00000004398">
    <property type="expression patterns" value="Expressed in oocyte and 104 other cell types or tissues"/>
</dbReference>
<dbReference type="GO" id="GO:0042720">
    <property type="term" value="C:mitochondrial inner membrane peptidase complex"/>
    <property type="evidence" value="ECO:0000318"/>
    <property type="project" value="GO_Central"/>
</dbReference>
<dbReference type="GO" id="GO:0004175">
    <property type="term" value="F:endopeptidase activity"/>
    <property type="evidence" value="ECO:0000318"/>
    <property type="project" value="GO_Central"/>
</dbReference>
<dbReference type="GO" id="GO:0004252">
    <property type="term" value="F:serine-type endopeptidase activity"/>
    <property type="evidence" value="ECO:0007669"/>
    <property type="project" value="InterPro"/>
</dbReference>
<dbReference type="GO" id="GO:0006627">
    <property type="term" value="P:protein processing involved in protein targeting to mitochondrion"/>
    <property type="evidence" value="ECO:0000318"/>
    <property type="project" value="GO_Central"/>
</dbReference>
<dbReference type="GO" id="GO:0006465">
    <property type="term" value="P:signal peptide processing"/>
    <property type="evidence" value="ECO:0007669"/>
    <property type="project" value="InterPro"/>
</dbReference>
<dbReference type="CDD" id="cd06530">
    <property type="entry name" value="S26_SPase_I"/>
    <property type="match status" value="1"/>
</dbReference>
<dbReference type="FunFam" id="2.10.109.10:FF:000005">
    <property type="entry name" value="Mitochondrial inner membrane protease subunit"/>
    <property type="match status" value="1"/>
</dbReference>
<dbReference type="Gene3D" id="2.10.109.10">
    <property type="entry name" value="Umud Fragment, subunit A"/>
    <property type="match status" value="1"/>
</dbReference>
<dbReference type="InterPro" id="IPR037730">
    <property type="entry name" value="IMP2"/>
</dbReference>
<dbReference type="InterPro" id="IPR036286">
    <property type="entry name" value="LexA/Signal_pep-like_sf"/>
</dbReference>
<dbReference type="InterPro" id="IPR000223">
    <property type="entry name" value="Pept_S26A_signal_pept_1"/>
</dbReference>
<dbReference type="InterPro" id="IPR019758">
    <property type="entry name" value="Pept_S26A_signal_pept_1_CS"/>
</dbReference>
<dbReference type="InterPro" id="IPR019533">
    <property type="entry name" value="Peptidase_S26"/>
</dbReference>
<dbReference type="NCBIfam" id="TIGR02227">
    <property type="entry name" value="sigpep_I_bact"/>
    <property type="match status" value="1"/>
</dbReference>
<dbReference type="PANTHER" id="PTHR46041">
    <property type="entry name" value="MITOCHONDRIAL INNER MEMBRANE PROTEASE SUBUNIT 2"/>
    <property type="match status" value="1"/>
</dbReference>
<dbReference type="PANTHER" id="PTHR46041:SF2">
    <property type="entry name" value="MITOCHONDRIAL INNER MEMBRANE PROTEASE SUBUNIT 2"/>
    <property type="match status" value="1"/>
</dbReference>
<dbReference type="Pfam" id="PF10502">
    <property type="entry name" value="Peptidase_S26"/>
    <property type="match status" value="1"/>
</dbReference>
<dbReference type="PRINTS" id="PR00727">
    <property type="entry name" value="LEADERPTASE"/>
</dbReference>
<dbReference type="SUPFAM" id="SSF51306">
    <property type="entry name" value="LexA/Signal peptidase"/>
    <property type="match status" value="1"/>
</dbReference>
<dbReference type="PROSITE" id="PS00761">
    <property type="entry name" value="SPASE_I_3"/>
    <property type="match status" value="1"/>
</dbReference>
<comment type="function">
    <text evidence="1">Catalyzes the removal of transit peptides required for the targeting of proteins from the mitochondrial matrix, across the inner membrane, into the inter-membrane space. Known to process the nuclear encoded protein DIABLO (By similarity).</text>
</comment>
<comment type="subunit">
    <text evidence="1">Heterodimer of 2 subunits, IMMPL1 and IMMPL2.</text>
</comment>
<comment type="subcellular location">
    <subcellularLocation>
        <location evidence="1">Mitochondrion inner membrane</location>
        <topology evidence="1">Single-pass membrane protein</topology>
    </subcellularLocation>
</comment>
<comment type="similarity">
    <text evidence="3">Belongs to the peptidase S26 family. IMP2 subfamily.</text>
</comment>
<sequence length="177" mass="19937">MVQSQGWVRRYFKAFCKGFFVAVPVAVTFLDRVACVARVEGASMQPSLNPGGSQSSDVVLLNHWKVRNFEVQRGDIVSLVSPKNPEQKIIKRVIALEGDIVKTMGHKNRYVKVPRGHIWVEGDHHGHSFDSNSFGPVSLGLLHAHATHILWPPKRWQKLESVLPPERLLVQSEEDCL</sequence>
<proteinExistence type="evidence at transcript level"/>
<accession>Q2KI92</accession>
<evidence type="ECO:0000250" key="1"/>
<evidence type="ECO:0000255" key="2"/>
<evidence type="ECO:0000305" key="3"/>
<protein>
    <recommendedName>
        <fullName>Mitochondrial inner membrane protease subunit 2</fullName>
        <ecNumber>3.4.21.-</ecNumber>
    </recommendedName>
    <alternativeName>
        <fullName>IMP2-like protein</fullName>
    </alternativeName>
</protein>
<gene>
    <name type="primary">IMMP2L</name>
</gene>
<keyword id="KW-0378">Hydrolase</keyword>
<keyword id="KW-0472">Membrane</keyword>
<keyword id="KW-0496">Mitochondrion</keyword>
<keyword id="KW-0999">Mitochondrion inner membrane</keyword>
<keyword id="KW-0645">Protease</keyword>
<keyword id="KW-1185">Reference proteome</keyword>
<keyword id="KW-0812">Transmembrane</keyword>
<keyword id="KW-1133">Transmembrane helix</keyword>